<organism>
    <name type="scientific">Salmonella paratyphi B (strain ATCC BAA-1250 / SPB7)</name>
    <dbReference type="NCBI Taxonomy" id="1016998"/>
    <lineage>
        <taxon>Bacteria</taxon>
        <taxon>Pseudomonadati</taxon>
        <taxon>Pseudomonadota</taxon>
        <taxon>Gammaproteobacteria</taxon>
        <taxon>Enterobacterales</taxon>
        <taxon>Enterobacteriaceae</taxon>
        <taxon>Salmonella</taxon>
    </lineage>
</organism>
<feature type="chain" id="PRO_0000354910" description="Catalase-peroxidase">
    <location>
        <begin position="1"/>
        <end position="726"/>
    </location>
</feature>
<feature type="region of interest" description="Disordered" evidence="2">
    <location>
        <begin position="1"/>
        <end position="33"/>
    </location>
</feature>
<feature type="active site" description="Proton acceptor" evidence="1">
    <location>
        <position position="106"/>
    </location>
</feature>
<feature type="binding site" description="axial binding residue" evidence="1">
    <location>
        <position position="267"/>
    </location>
    <ligand>
        <name>heme b</name>
        <dbReference type="ChEBI" id="CHEBI:60344"/>
    </ligand>
    <ligandPart>
        <name>Fe</name>
        <dbReference type="ChEBI" id="CHEBI:18248"/>
    </ligandPart>
</feature>
<feature type="site" description="Transition state stabilizer" evidence="1">
    <location>
        <position position="102"/>
    </location>
</feature>
<feature type="cross-link" description="Tryptophyl-tyrosyl-methioninium (Trp-Tyr) (with M-252)" evidence="1">
    <location>
        <begin position="105"/>
        <end position="226"/>
    </location>
</feature>
<feature type="cross-link" description="Tryptophyl-tyrosyl-methioninium (Tyr-Met) (with W-105)" evidence="1">
    <location>
        <begin position="226"/>
        <end position="252"/>
    </location>
</feature>
<reference key="1">
    <citation type="submission" date="2007-11" db="EMBL/GenBank/DDBJ databases">
        <authorList>
            <consortium name="The Salmonella enterica serovar Paratyphi B Genome Sequencing Project"/>
            <person name="McClelland M."/>
            <person name="Sanderson E.K."/>
            <person name="Porwollik S."/>
            <person name="Spieth J."/>
            <person name="Clifton W.S."/>
            <person name="Fulton R."/>
            <person name="Cordes M."/>
            <person name="Wollam A."/>
            <person name="Shah N."/>
            <person name="Pepin K."/>
            <person name="Bhonagiri V."/>
            <person name="Nash W."/>
            <person name="Johnson M."/>
            <person name="Thiruvilangam P."/>
            <person name="Wilson R."/>
        </authorList>
    </citation>
    <scope>NUCLEOTIDE SEQUENCE [LARGE SCALE GENOMIC DNA]</scope>
    <source>
        <strain>ATCC BAA-1250 / SPB7</strain>
    </source>
</reference>
<name>KATG_SALPB</name>
<accession>A9N0F0</accession>
<keyword id="KW-0349">Heme</keyword>
<keyword id="KW-0376">Hydrogen peroxide</keyword>
<keyword id="KW-0408">Iron</keyword>
<keyword id="KW-0479">Metal-binding</keyword>
<keyword id="KW-0560">Oxidoreductase</keyword>
<keyword id="KW-0575">Peroxidase</keyword>
<evidence type="ECO:0000255" key="1">
    <source>
        <dbReference type="HAMAP-Rule" id="MF_01961"/>
    </source>
</evidence>
<evidence type="ECO:0000256" key="2">
    <source>
        <dbReference type="SAM" id="MobiDB-lite"/>
    </source>
</evidence>
<proteinExistence type="inferred from homology"/>
<comment type="function">
    <text evidence="1">Bifunctional enzyme with both catalase and broad-spectrum peroxidase activity.</text>
</comment>
<comment type="catalytic activity">
    <reaction evidence="1">
        <text>H2O2 + AH2 = A + 2 H2O</text>
        <dbReference type="Rhea" id="RHEA:30275"/>
        <dbReference type="ChEBI" id="CHEBI:13193"/>
        <dbReference type="ChEBI" id="CHEBI:15377"/>
        <dbReference type="ChEBI" id="CHEBI:16240"/>
        <dbReference type="ChEBI" id="CHEBI:17499"/>
        <dbReference type="EC" id="1.11.1.21"/>
    </reaction>
</comment>
<comment type="catalytic activity">
    <reaction evidence="1">
        <text>2 H2O2 = O2 + 2 H2O</text>
        <dbReference type="Rhea" id="RHEA:20309"/>
        <dbReference type="ChEBI" id="CHEBI:15377"/>
        <dbReference type="ChEBI" id="CHEBI:15379"/>
        <dbReference type="ChEBI" id="CHEBI:16240"/>
        <dbReference type="EC" id="1.11.1.21"/>
    </reaction>
</comment>
<comment type="cofactor">
    <cofactor evidence="1">
        <name>heme b</name>
        <dbReference type="ChEBI" id="CHEBI:60344"/>
    </cofactor>
    <text evidence="1">Binds 1 heme b (iron(II)-protoporphyrin IX) group per dimer.</text>
</comment>
<comment type="subunit">
    <text evidence="1">Homodimer or homotetramer.</text>
</comment>
<comment type="PTM">
    <text evidence="1">Formation of the three residue Trp-Tyr-Met cross-link is important for the catalase, but not the peroxidase activity of the enzyme.</text>
</comment>
<comment type="similarity">
    <text evidence="1">Belongs to the peroxidase family. Peroxidase/catalase subfamily.</text>
</comment>
<dbReference type="EC" id="1.11.1.21" evidence="1"/>
<dbReference type="EMBL" id="CP000886">
    <property type="protein sequence ID" value="ABX70379.1"/>
    <property type="molecule type" value="Genomic_DNA"/>
</dbReference>
<dbReference type="RefSeq" id="WP_000108106.1">
    <property type="nucleotide sequence ID" value="NC_010102.1"/>
</dbReference>
<dbReference type="SMR" id="A9N0F0"/>
<dbReference type="KEGG" id="spq:SPAB_05088"/>
<dbReference type="PATRIC" id="fig|1016998.12.peg.4776"/>
<dbReference type="HOGENOM" id="CLU_025424_2_0_6"/>
<dbReference type="BioCyc" id="SENT1016998:SPAB_RS20705-MONOMER"/>
<dbReference type="Proteomes" id="UP000008556">
    <property type="component" value="Chromosome"/>
</dbReference>
<dbReference type="GO" id="GO:0005829">
    <property type="term" value="C:cytosol"/>
    <property type="evidence" value="ECO:0007669"/>
    <property type="project" value="TreeGrafter"/>
</dbReference>
<dbReference type="GO" id="GO:0004096">
    <property type="term" value="F:catalase activity"/>
    <property type="evidence" value="ECO:0007669"/>
    <property type="project" value="UniProtKB-UniRule"/>
</dbReference>
<dbReference type="GO" id="GO:0020037">
    <property type="term" value="F:heme binding"/>
    <property type="evidence" value="ECO:0007669"/>
    <property type="project" value="InterPro"/>
</dbReference>
<dbReference type="GO" id="GO:0046872">
    <property type="term" value="F:metal ion binding"/>
    <property type="evidence" value="ECO:0007669"/>
    <property type="project" value="UniProtKB-KW"/>
</dbReference>
<dbReference type="GO" id="GO:0070301">
    <property type="term" value="P:cellular response to hydrogen peroxide"/>
    <property type="evidence" value="ECO:0007669"/>
    <property type="project" value="TreeGrafter"/>
</dbReference>
<dbReference type="GO" id="GO:0042744">
    <property type="term" value="P:hydrogen peroxide catabolic process"/>
    <property type="evidence" value="ECO:0007669"/>
    <property type="project" value="UniProtKB-KW"/>
</dbReference>
<dbReference type="CDD" id="cd08200">
    <property type="entry name" value="catalase_peroxidase_2"/>
    <property type="match status" value="1"/>
</dbReference>
<dbReference type="FunFam" id="1.10.420.10:FF:000002">
    <property type="entry name" value="Catalase-peroxidase"/>
    <property type="match status" value="1"/>
</dbReference>
<dbReference type="FunFam" id="1.10.420.10:FF:000004">
    <property type="entry name" value="Catalase-peroxidase"/>
    <property type="match status" value="1"/>
</dbReference>
<dbReference type="FunFam" id="1.10.520.10:FF:000002">
    <property type="entry name" value="Catalase-peroxidase"/>
    <property type="match status" value="1"/>
</dbReference>
<dbReference type="Gene3D" id="1.10.520.10">
    <property type="match status" value="2"/>
</dbReference>
<dbReference type="Gene3D" id="1.10.420.10">
    <property type="entry name" value="Peroxidase, domain 2"/>
    <property type="match status" value="2"/>
</dbReference>
<dbReference type="HAMAP" id="MF_01961">
    <property type="entry name" value="Catal_peroxid"/>
    <property type="match status" value="1"/>
</dbReference>
<dbReference type="InterPro" id="IPR000763">
    <property type="entry name" value="Catalase_peroxidase"/>
</dbReference>
<dbReference type="InterPro" id="IPR002016">
    <property type="entry name" value="Haem_peroxidase"/>
</dbReference>
<dbReference type="InterPro" id="IPR010255">
    <property type="entry name" value="Haem_peroxidase_sf"/>
</dbReference>
<dbReference type="InterPro" id="IPR019794">
    <property type="entry name" value="Peroxidases_AS"/>
</dbReference>
<dbReference type="InterPro" id="IPR019793">
    <property type="entry name" value="Peroxidases_heam-ligand_BS"/>
</dbReference>
<dbReference type="NCBIfam" id="TIGR00198">
    <property type="entry name" value="cat_per_HPI"/>
    <property type="match status" value="1"/>
</dbReference>
<dbReference type="NCBIfam" id="NF011635">
    <property type="entry name" value="PRK15061.1"/>
    <property type="match status" value="1"/>
</dbReference>
<dbReference type="PANTHER" id="PTHR30555:SF0">
    <property type="entry name" value="CATALASE-PEROXIDASE"/>
    <property type="match status" value="1"/>
</dbReference>
<dbReference type="PANTHER" id="PTHR30555">
    <property type="entry name" value="HYDROPEROXIDASE I, BIFUNCTIONAL CATALASE-PEROXIDASE"/>
    <property type="match status" value="1"/>
</dbReference>
<dbReference type="Pfam" id="PF00141">
    <property type="entry name" value="peroxidase"/>
    <property type="match status" value="2"/>
</dbReference>
<dbReference type="PRINTS" id="PR00460">
    <property type="entry name" value="BPEROXIDASE"/>
</dbReference>
<dbReference type="PRINTS" id="PR00458">
    <property type="entry name" value="PEROXIDASE"/>
</dbReference>
<dbReference type="SUPFAM" id="SSF48113">
    <property type="entry name" value="Heme-dependent peroxidases"/>
    <property type="match status" value="2"/>
</dbReference>
<dbReference type="PROSITE" id="PS00435">
    <property type="entry name" value="PEROXIDASE_1"/>
    <property type="match status" value="1"/>
</dbReference>
<dbReference type="PROSITE" id="PS00436">
    <property type="entry name" value="PEROXIDASE_2"/>
    <property type="match status" value="1"/>
</dbReference>
<dbReference type="PROSITE" id="PS50873">
    <property type="entry name" value="PEROXIDASE_4"/>
    <property type="match status" value="1"/>
</dbReference>
<gene>
    <name evidence="1" type="primary">katG</name>
    <name type="ordered locus">SPAB_05088</name>
</gene>
<protein>
    <recommendedName>
        <fullName evidence="1">Catalase-peroxidase</fullName>
        <shortName evidence="1">CP</shortName>
        <ecNumber evidence="1">1.11.1.21</ecNumber>
    </recommendedName>
    <alternativeName>
        <fullName evidence="1">Peroxidase/catalase</fullName>
    </alternativeName>
</protein>
<sequence length="726" mass="79617">MSTTDDTHNTLSTGKCPFHQGGHDRSAGAGTASRDWWPNQLRVDLLNQHSNRSNPLGEDFDYRKEFSKLDYSALKGDLKALLTDSQPWWPADWGSYVGLFIRMAWHGAGTYRSIDGRGGAGRGQQRFAPLNSWPDNVSLDKARRLLWPIKQKYGQKISWADLFILAGNVALENSGFRTFGFGAGREDVWEPDLDVNWGDEKAWLTHRHPEALAKAPLGATEMGLIYVNPEGPDHSGEPLSAAAAIRATFGNMGMNDEETVALIAGGHTLGKTHGAAAASHVGADPEAAPIEAQGLGWASSYGSGVGADAITSGLEVVWTQTPTQWSNYFFENLFKYEWVQTRSPAGAIQFEAVDAPDIIPDPFDPSKKRKPTMLVTDLTLRFDPEFEKISRRFLNDPQAFNEAFARAWFKLTHRDMGPKARYIGPEVPKEDLIWQDPLPQPLYQPTQEDIINLKAAIAASGLSISEMVSVAWASASTFRGGDKRGGANGARLALAPQRDWDVNAVAARVLPVLEEIQKTTNKASLADIIVLAGVVGIEQAAAAAGVSISVPFAPGRVDARQDQTDIEMFSLLEPIADGFRNYRARLDVSTTESLLIDKAQQLTLTAPEMTVLVGGMRVLGTNFDGSQNGVFTDRPGVLSTDFFANLLDMSYEWKPTDESNELFEGRDRLTGEVKYTATRADLVFGSNSVLRALAEVYACSDAHEKFVKDFVAAWVKVMNLDRFDLQ</sequence>